<evidence type="ECO:0000250" key="1">
    <source>
        <dbReference type="UniProtKB" id="P48751"/>
    </source>
</evidence>
<evidence type="ECO:0000255" key="2"/>
<evidence type="ECO:0000256" key="3">
    <source>
        <dbReference type="SAM" id="MobiDB-lite"/>
    </source>
</evidence>
<evidence type="ECO:0000269" key="4">
    <source>
    </source>
</evidence>
<evidence type="ECO:0000269" key="5">
    <source>
    </source>
</evidence>
<evidence type="ECO:0000305" key="6"/>
<evidence type="ECO:0000312" key="7">
    <source>
        <dbReference type="ZFIN" id="ZDB-GENE-141006-1"/>
    </source>
</evidence>
<proteinExistence type="evidence at transcript level"/>
<dbReference type="EMBL" id="KF771000">
    <property type="protein sequence ID" value="AHC12990.1"/>
    <property type="molecule type" value="mRNA"/>
</dbReference>
<dbReference type="EMBL" id="FP103057">
    <property type="status" value="NOT_ANNOTATED_CDS"/>
    <property type="molecule type" value="Genomic_DNA"/>
</dbReference>
<dbReference type="EMBL" id="FP243360">
    <property type="status" value="NOT_ANNOTATED_CDS"/>
    <property type="molecule type" value="Genomic_DNA"/>
</dbReference>
<dbReference type="RefSeq" id="NP_001289693.1">
    <property type="nucleotide sequence ID" value="NM_001302764.1"/>
</dbReference>
<dbReference type="SMR" id="A0A096X8J7"/>
<dbReference type="GeneID" id="100333073"/>
<dbReference type="KEGG" id="dre:100333073"/>
<dbReference type="AGR" id="ZFIN:ZDB-GENE-141006-1"/>
<dbReference type="CTD" id="6508"/>
<dbReference type="ZFIN" id="ZDB-GENE-141006-1">
    <property type="gene designation" value="slc4a3"/>
</dbReference>
<dbReference type="OrthoDB" id="1735926at2759"/>
<dbReference type="PRO" id="PR:A0A096X8J7"/>
<dbReference type="Proteomes" id="UP000000437">
    <property type="component" value="Chromosome 9"/>
</dbReference>
<dbReference type="GO" id="GO:0005886">
    <property type="term" value="C:plasma membrane"/>
    <property type="evidence" value="ECO:0000318"/>
    <property type="project" value="GO_Central"/>
</dbReference>
<dbReference type="GO" id="GO:0008509">
    <property type="term" value="F:monoatomic anion transmembrane transporter activity"/>
    <property type="evidence" value="ECO:0007669"/>
    <property type="project" value="InterPro"/>
</dbReference>
<dbReference type="GO" id="GO:0005452">
    <property type="term" value="F:solute:inorganic anion antiporter activity"/>
    <property type="evidence" value="ECO:0007669"/>
    <property type="project" value="InterPro"/>
</dbReference>
<dbReference type="GO" id="GO:0015701">
    <property type="term" value="P:bicarbonate transport"/>
    <property type="evidence" value="ECO:0000318"/>
    <property type="project" value="GO_Central"/>
</dbReference>
<dbReference type="GO" id="GO:0086001">
    <property type="term" value="P:cardiac muscle cell action potential"/>
    <property type="evidence" value="ECO:0000315"/>
    <property type="project" value="ZFIN"/>
</dbReference>
<dbReference type="GO" id="GO:0051453">
    <property type="term" value="P:regulation of intracellular pH"/>
    <property type="evidence" value="ECO:0000318"/>
    <property type="project" value="GO_Central"/>
</dbReference>
<dbReference type="GO" id="GO:0055085">
    <property type="term" value="P:transmembrane transport"/>
    <property type="evidence" value="ECO:0000318"/>
    <property type="project" value="GO_Central"/>
</dbReference>
<dbReference type="FunFam" id="1.10.287.570:FF:000001">
    <property type="entry name" value="Anion exchange protein"/>
    <property type="match status" value="1"/>
</dbReference>
<dbReference type="FunFam" id="3.40.930.10:FF:000004">
    <property type="entry name" value="Anion exchange protein"/>
    <property type="match status" value="1"/>
</dbReference>
<dbReference type="Gene3D" id="1.10.287.570">
    <property type="entry name" value="Helical hairpin bin"/>
    <property type="match status" value="1"/>
</dbReference>
<dbReference type="Gene3D" id="3.40.930.10">
    <property type="entry name" value="Mannitol-specific EII, Chain A"/>
    <property type="match status" value="1"/>
</dbReference>
<dbReference type="InterPro" id="IPR001717">
    <property type="entry name" value="Anion_exchange"/>
</dbReference>
<dbReference type="InterPro" id="IPR018241">
    <property type="entry name" value="Anion_exchange_CS"/>
</dbReference>
<dbReference type="InterPro" id="IPR013769">
    <property type="entry name" value="Band3_cytoplasmic_dom"/>
</dbReference>
<dbReference type="InterPro" id="IPR011531">
    <property type="entry name" value="HCO3_transpt-like_TM_dom"/>
</dbReference>
<dbReference type="InterPro" id="IPR003020">
    <property type="entry name" value="HCO3_transpt_euk"/>
</dbReference>
<dbReference type="InterPro" id="IPR016152">
    <property type="entry name" value="PTrfase/Anion_transptr"/>
</dbReference>
<dbReference type="NCBIfam" id="TIGR00834">
    <property type="entry name" value="ae"/>
    <property type="match status" value="1"/>
</dbReference>
<dbReference type="PANTHER" id="PTHR11453">
    <property type="entry name" value="ANION EXCHANGE PROTEIN"/>
    <property type="match status" value="1"/>
</dbReference>
<dbReference type="PANTHER" id="PTHR11453:SF15">
    <property type="entry name" value="ANION EXCHANGE PROTEIN 3"/>
    <property type="match status" value="1"/>
</dbReference>
<dbReference type="Pfam" id="PF07565">
    <property type="entry name" value="Band_3_cyto"/>
    <property type="match status" value="1"/>
</dbReference>
<dbReference type="Pfam" id="PF00955">
    <property type="entry name" value="HCO3_cotransp"/>
    <property type="match status" value="2"/>
</dbReference>
<dbReference type="PRINTS" id="PR00165">
    <property type="entry name" value="ANIONEXCHNGR"/>
</dbReference>
<dbReference type="PRINTS" id="PR01231">
    <property type="entry name" value="HCO3TRNSPORT"/>
</dbReference>
<dbReference type="SUPFAM" id="SSF55804">
    <property type="entry name" value="Phoshotransferase/anion transport protein"/>
    <property type="match status" value="1"/>
</dbReference>
<dbReference type="PROSITE" id="PS00220">
    <property type="entry name" value="ANION_EXCHANGER_2"/>
    <property type="match status" value="1"/>
</dbReference>
<accession>A0A096X8J7</accession>
<name>B3A3_DANRE</name>
<comment type="function">
    <text evidence="1 5">Sodium-independent anion exchanger which mediates the electroneutral exchange of chloride for bicarbonate ions across the cell membrane (By similarity). May be involved in the regulation of intracellular pH, and the modulation of cardiac action potential (PubMed:29167417).</text>
</comment>
<comment type="catalytic activity">
    <reaction evidence="1">
        <text>hydrogencarbonate(in) + chloride(out) = hydrogencarbonate(out) + chloride(in)</text>
        <dbReference type="Rhea" id="RHEA:72363"/>
        <dbReference type="ChEBI" id="CHEBI:17544"/>
        <dbReference type="ChEBI" id="CHEBI:17996"/>
    </reaction>
</comment>
<comment type="subcellular location">
    <subcellularLocation>
        <location evidence="4">Cell membrane</location>
        <topology evidence="2">Multi-pass membrane protein</topology>
    </subcellularLocation>
</comment>
<comment type="tissue specificity">
    <text evidence="4">Widely expressed at low levels.</text>
</comment>
<comment type="developmental stage">
    <text evidence="4">Expressed in developing fin bud at 36 and 72 hpf.</text>
</comment>
<comment type="disruption phenotype">
    <text evidence="5">Morpholino Slc4a3 knockdown in fish embryos results in significantly shortened duration of heart systolic contraction and reduced Q-T intervals, in association with increased ventricular intracellular pH.</text>
</comment>
<comment type="similarity">
    <text evidence="6">Belongs to the anion exchanger (TC 2.A.31) family.</text>
</comment>
<organism>
    <name type="scientific">Danio rerio</name>
    <name type="common">Zebrafish</name>
    <name type="synonym">Brachydanio rerio</name>
    <dbReference type="NCBI Taxonomy" id="7955"/>
    <lineage>
        <taxon>Eukaryota</taxon>
        <taxon>Metazoa</taxon>
        <taxon>Chordata</taxon>
        <taxon>Craniata</taxon>
        <taxon>Vertebrata</taxon>
        <taxon>Euteleostomi</taxon>
        <taxon>Actinopterygii</taxon>
        <taxon>Neopterygii</taxon>
        <taxon>Teleostei</taxon>
        <taxon>Ostariophysi</taxon>
        <taxon>Cypriniformes</taxon>
        <taxon>Danionidae</taxon>
        <taxon>Danioninae</taxon>
        <taxon>Danio</taxon>
    </lineage>
</organism>
<reference key="1">
    <citation type="journal article" date="2014" name="Pflugers Arch.">
        <title>Molecular cloning and functional characterization of zebrafish Slc4a3/Ae3 anion exchanger.</title>
        <authorList>
            <person name="Shmukler B.E."/>
            <person name="Reimold F.R."/>
            <person name="Heneghan J.F."/>
            <person name="Chen C."/>
            <person name="Zhao T."/>
            <person name="Paw B.H."/>
            <person name="Alper S.L."/>
        </authorList>
    </citation>
    <scope>NUCLEOTIDE SEQUENCE [MRNA]</scope>
    <scope>TISSUE SPECIFICITY</scope>
    <scope>DEVELOPMENTAL STAGE</scope>
    <scope>SUBCELLULAR LOCATION</scope>
</reference>
<reference key="2">
    <citation type="journal article" date="2013" name="Nature">
        <title>The zebrafish reference genome sequence and its relationship to the human genome.</title>
        <authorList>
            <person name="Howe K."/>
            <person name="Clark M.D."/>
            <person name="Torroja C.F."/>
            <person name="Torrance J."/>
            <person name="Berthelot C."/>
            <person name="Muffato M."/>
            <person name="Collins J.E."/>
            <person name="Humphray S."/>
            <person name="McLaren K."/>
            <person name="Matthews L."/>
            <person name="McLaren S."/>
            <person name="Sealy I."/>
            <person name="Caccamo M."/>
            <person name="Churcher C."/>
            <person name="Scott C."/>
            <person name="Barrett J.C."/>
            <person name="Koch R."/>
            <person name="Rauch G.J."/>
            <person name="White S."/>
            <person name="Chow W."/>
            <person name="Kilian B."/>
            <person name="Quintais L.T."/>
            <person name="Guerra-Assuncao J.A."/>
            <person name="Zhou Y."/>
            <person name="Gu Y."/>
            <person name="Yen J."/>
            <person name="Vogel J.H."/>
            <person name="Eyre T."/>
            <person name="Redmond S."/>
            <person name="Banerjee R."/>
            <person name="Chi J."/>
            <person name="Fu B."/>
            <person name="Langley E."/>
            <person name="Maguire S.F."/>
            <person name="Laird G.K."/>
            <person name="Lloyd D."/>
            <person name="Kenyon E."/>
            <person name="Donaldson S."/>
            <person name="Sehra H."/>
            <person name="Almeida-King J."/>
            <person name="Loveland J."/>
            <person name="Trevanion S."/>
            <person name="Jones M."/>
            <person name="Quail M."/>
            <person name="Willey D."/>
            <person name="Hunt A."/>
            <person name="Burton J."/>
            <person name="Sims S."/>
            <person name="McLay K."/>
            <person name="Plumb B."/>
            <person name="Davis J."/>
            <person name="Clee C."/>
            <person name="Oliver K."/>
            <person name="Clark R."/>
            <person name="Riddle C."/>
            <person name="Elliot D."/>
            <person name="Threadgold G."/>
            <person name="Harden G."/>
            <person name="Ware D."/>
            <person name="Begum S."/>
            <person name="Mortimore B."/>
            <person name="Kerry G."/>
            <person name="Heath P."/>
            <person name="Phillimore B."/>
            <person name="Tracey A."/>
            <person name="Corby N."/>
            <person name="Dunn M."/>
            <person name="Johnson C."/>
            <person name="Wood J."/>
            <person name="Clark S."/>
            <person name="Pelan S."/>
            <person name="Griffiths G."/>
            <person name="Smith M."/>
            <person name="Glithero R."/>
            <person name="Howden P."/>
            <person name="Barker N."/>
            <person name="Lloyd C."/>
            <person name="Stevens C."/>
            <person name="Harley J."/>
            <person name="Holt K."/>
            <person name="Panagiotidis G."/>
            <person name="Lovell J."/>
            <person name="Beasley H."/>
            <person name="Henderson C."/>
            <person name="Gordon D."/>
            <person name="Auger K."/>
            <person name="Wright D."/>
            <person name="Collins J."/>
            <person name="Raisen C."/>
            <person name="Dyer L."/>
            <person name="Leung K."/>
            <person name="Robertson L."/>
            <person name="Ambridge K."/>
            <person name="Leongamornlert D."/>
            <person name="McGuire S."/>
            <person name="Gilderthorp R."/>
            <person name="Griffiths C."/>
            <person name="Manthravadi D."/>
            <person name="Nichol S."/>
            <person name="Barker G."/>
            <person name="Whitehead S."/>
            <person name="Kay M."/>
            <person name="Brown J."/>
            <person name="Murnane C."/>
            <person name="Gray E."/>
            <person name="Humphries M."/>
            <person name="Sycamore N."/>
            <person name="Barker D."/>
            <person name="Saunders D."/>
            <person name="Wallis J."/>
            <person name="Babbage A."/>
            <person name="Hammond S."/>
            <person name="Mashreghi-Mohammadi M."/>
            <person name="Barr L."/>
            <person name="Martin S."/>
            <person name="Wray P."/>
            <person name="Ellington A."/>
            <person name="Matthews N."/>
            <person name="Ellwood M."/>
            <person name="Woodmansey R."/>
            <person name="Clark G."/>
            <person name="Cooper J."/>
            <person name="Tromans A."/>
            <person name="Grafham D."/>
            <person name="Skuce C."/>
            <person name="Pandian R."/>
            <person name="Andrews R."/>
            <person name="Harrison E."/>
            <person name="Kimberley A."/>
            <person name="Garnett J."/>
            <person name="Fosker N."/>
            <person name="Hall R."/>
            <person name="Garner P."/>
            <person name="Kelly D."/>
            <person name="Bird C."/>
            <person name="Palmer S."/>
            <person name="Gehring I."/>
            <person name="Berger A."/>
            <person name="Dooley C.M."/>
            <person name="Ersan-Urun Z."/>
            <person name="Eser C."/>
            <person name="Geiger H."/>
            <person name="Geisler M."/>
            <person name="Karotki L."/>
            <person name="Kirn A."/>
            <person name="Konantz J."/>
            <person name="Konantz M."/>
            <person name="Oberlander M."/>
            <person name="Rudolph-Geiger S."/>
            <person name="Teucke M."/>
            <person name="Lanz C."/>
            <person name="Raddatz G."/>
            <person name="Osoegawa K."/>
            <person name="Zhu B."/>
            <person name="Rapp A."/>
            <person name="Widaa S."/>
            <person name="Langford C."/>
            <person name="Yang F."/>
            <person name="Schuster S.C."/>
            <person name="Carter N.P."/>
            <person name="Harrow J."/>
            <person name="Ning Z."/>
            <person name="Herrero J."/>
            <person name="Searle S.M."/>
            <person name="Enright A."/>
            <person name="Geisler R."/>
            <person name="Plasterk R.H."/>
            <person name="Lee C."/>
            <person name="Westerfield M."/>
            <person name="de Jong P.J."/>
            <person name="Zon L.I."/>
            <person name="Postlethwait J.H."/>
            <person name="Nusslein-Volhard C."/>
            <person name="Hubbard T.J."/>
            <person name="Roest Crollius H."/>
            <person name="Rogers J."/>
            <person name="Stemple D.L."/>
        </authorList>
    </citation>
    <scope>NUCLEOTIDE SEQUENCE [LARGE SCALE GENOMIC DNA]</scope>
    <source>
        <strain>Tuebingen</strain>
    </source>
</reference>
<reference key="3">
    <citation type="journal article" date="2017" name="Nat. Commun.">
        <title>Loss-of-activity-mutation in the cardiac chloride-bicarbonate exchanger AE3 causes short QT syndrome.</title>
        <authorList>
            <person name="Thorsen K."/>
            <person name="Dam V.S."/>
            <person name="Kjaer-Sorensen K."/>
            <person name="Pedersen L.N."/>
            <person name="Skeberdis V.A."/>
            <person name="Jurevicius J."/>
            <person name="Treinys R."/>
            <person name="Petersen I.M.B.S."/>
            <person name="Nielsen M.S."/>
            <person name="Oxvig C."/>
            <person name="Morth J.P."/>
            <person name="Matchkov V.V."/>
            <person name="Aalkjaer C."/>
            <person name="Bundgaard H."/>
            <person name="Jensen H.K."/>
        </authorList>
    </citation>
    <scope>FUNCTION</scope>
    <scope>DISRUPTION PHENOTYPE</scope>
</reference>
<sequence length="1170" mass="132420">MGRSYNEKDFEYHRHTFHHTHHPLSTHLPPQRFRKRVLSMDRRRKRKRKKKKTSMPPSDVTPTIHEVDEEEAESEIEGQCQAATPTEPSEELPQLSLGSEEDLAADLPLSSFHMESERPASSEETLPSPASMEEKEETQQPPDGGEHKDISNSFSPSPEAASMTTRGWFRRKPVHRLAGAQRTSYDLRERICIGSMTAMETAVYQKVPTDEAEAQMLASADLDDMKSHRFEDNPGVRRHLVKKSSRCQLPRSSNGSPPLSSLKRRKRMDKKTHEVFVELNELIVDKNQEMRWKERARWIKFEEDVEEETDRWGKPHVASLSFRSLLELRRTITHGAIMLDLDQSTLPGIAHLMVETMIISDQIRAEDRANVLRALLLKHSHPNDEKEGLFHRNHSVTSLGSFRHNHNHVHDTSLPLVSQDHEEMHDSKAAEHDKEKSLHPIPAEGHAASRSLKLLAKIPKDAEATVVLVGCVEFLEKPAMAFVRLNESILLESILEVPVPIRFIFVLLGPTQTNVDYHEIGRSFSTLMSDKNFHEVAYFADDRQDLLNGINEFLDCSIVIPPSDVEGKDLLKTVASFQKQMLRKRKERELKKCASTVTGAELETKDVNIEEQEEEDQFDVDPLKRSGIPFGGLIHDIRRRYPRYISDLKDALDTQCIAAVIFIYFAALSPTITFGGLLGEKTQGMMGVSELIISTATVGVLFSLLAGQPLLIIGFSGPLLVFEEAFYKFCQAQGFEYLTGRVWIGFWLIFIVLVIVAAEGSFLVRYISPFTQEIFAFLISLIFIYETFSKLIKVFQEHPLMMSYTSAAFKHSDQRGSSVIGEPILNQPNTALLSMVLMMGTFFTAFFLRKLRNSRFLGGKVRRVIGDFGIPISILISVLVDILIPDTYTQKLNVPSGFSVTSPDKRGWFISPFGDKQPFPVWMMGASVIPALLVFILIFMETQITTLIVSKKERRLMKGSGFHLDLLLIVTLGAICPLFGLPWLTAATVRSVTHVNALTVMSKATAPGEKPMIQEVKEQRVTGMCVAILVGLSIVMTDVLRHIPLAVLFGIFLYMGITSLTGIQLYERITLMVTPAKHHPDHVYVTKVKTWRMNMFTVIQLLCIVLLWVVKSTVASLAFPFILIMTVPLRRLILTRIFEERELAALDADEDSPNFDEDGRDEYNEIHMLV</sequence>
<protein>
    <recommendedName>
        <fullName evidence="1">Anion exchange protein 3</fullName>
        <shortName evidence="1">AE 3</shortName>
    </recommendedName>
    <alternativeName>
        <fullName evidence="7">Solute carrier family 4 member 3</fullName>
    </alternativeName>
</protein>
<feature type="chain" id="PRO_0000458251" description="Anion exchange protein 3">
    <location>
        <begin position="1"/>
        <end position="1170"/>
    </location>
</feature>
<feature type="topological domain" description="Cytoplasmic" evidence="6">
    <location>
        <begin position="1"/>
        <end position="656"/>
    </location>
</feature>
<feature type="transmembrane region" description="Helical" evidence="2">
    <location>
        <begin position="657"/>
        <end position="677"/>
    </location>
</feature>
<feature type="transmembrane region" description="Helical" evidence="2">
    <location>
        <begin position="702"/>
        <end position="722"/>
    </location>
</feature>
<feature type="transmembrane region" description="Helical" evidence="2">
    <location>
        <begin position="744"/>
        <end position="764"/>
    </location>
</feature>
<feature type="transmembrane region" description="Helical" evidence="2">
    <location>
        <begin position="774"/>
        <end position="794"/>
    </location>
</feature>
<feature type="transmembrane region" description="Helical" evidence="2">
    <location>
        <begin position="828"/>
        <end position="848"/>
    </location>
</feature>
<feature type="topological domain" description="Cytoplasmic" evidence="6">
    <location>
        <begin position="849"/>
        <end position="863"/>
    </location>
</feature>
<feature type="transmembrane region" description="Helical" evidence="2">
    <location>
        <begin position="864"/>
        <end position="884"/>
    </location>
</feature>
<feature type="transmembrane region" description="Helical" evidence="2">
    <location>
        <begin position="919"/>
        <end position="939"/>
    </location>
</feature>
<feature type="transmembrane region" description="Helical" evidence="2">
    <location>
        <begin position="966"/>
        <end position="986"/>
    </location>
</feature>
<feature type="transmembrane region" description="Helical" evidence="2">
    <location>
        <begin position="1020"/>
        <end position="1063"/>
    </location>
</feature>
<feature type="transmembrane region" description="Helical" evidence="2">
    <location>
        <begin position="1104"/>
        <end position="1124"/>
    </location>
</feature>
<feature type="region of interest" description="Disordered" evidence="3">
    <location>
        <begin position="17"/>
        <end position="96"/>
    </location>
</feature>
<feature type="region of interest" description="Disordered" evidence="3">
    <location>
        <begin position="112"/>
        <end position="167"/>
    </location>
</feature>
<feature type="region of interest" description="Disordered" evidence="3">
    <location>
        <begin position="239"/>
        <end position="267"/>
    </location>
</feature>
<feature type="region of interest" description="Membrane (anion exchange)" evidence="1">
    <location>
        <begin position="657"/>
        <end position="1170"/>
    </location>
</feature>
<feature type="compositionally biased region" description="Basic residues" evidence="3">
    <location>
        <begin position="32"/>
        <end position="53"/>
    </location>
</feature>
<feature type="compositionally biased region" description="Acidic residues" evidence="3">
    <location>
        <begin position="67"/>
        <end position="76"/>
    </location>
</feature>
<feature type="compositionally biased region" description="Polar residues" evidence="3">
    <location>
        <begin position="246"/>
        <end position="259"/>
    </location>
</feature>
<gene>
    <name evidence="7" type="primary">Slc4a3</name>
    <name evidence="7" type="synonym">Ae3</name>
</gene>
<keyword id="KW-0039">Anion exchange</keyword>
<keyword id="KW-0050">Antiport</keyword>
<keyword id="KW-1003">Cell membrane</keyword>
<keyword id="KW-0406">Ion transport</keyword>
<keyword id="KW-0472">Membrane</keyword>
<keyword id="KW-1185">Reference proteome</keyword>
<keyword id="KW-0812">Transmembrane</keyword>
<keyword id="KW-1133">Transmembrane helix</keyword>
<keyword id="KW-0813">Transport</keyword>